<sequence>MAQRMTTQLLLLLVWVAVVGEAQTRIAWARTELLNVCMNAKHHKEKPGPEDKLHEQCRPWRKNACCSTNTSQEAHKDVSYLYRFNWNHCGEMAPACKRHFIQDTCLYECSPNLGPWIQQVDQSWRKERVLNVPLCKEDCEQWWEDCRTSYTCKSNWHKGWNWTSGFNKCAVGAACQPFHFYFPTPTVLCNEIWTHSYKVSNYSRGSGRCIQMWFDPAQGNPNEEVARFYAAAMSGAGPWAAWPFLLSLALMLLWLLS</sequence>
<proteinExistence type="evidence at protein level"/>
<keyword id="KW-0002">3D-structure</keyword>
<keyword id="KW-1003">Cell membrane</keyword>
<keyword id="KW-0968">Cytoplasmic vesicle</keyword>
<keyword id="KW-0903">Direct protein sequencing</keyword>
<keyword id="KW-1015">Disulfide bond</keyword>
<keyword id="KW-0967">Endosome</keyword>
<keyword id="KW-0290">Folate-binding</keyword>
<keyword id="KW-0325">Glycoprotein</keyword>
<keyword id="KW-0336">GPI-anchor</keyword>
<keyword id="KW-0449">Lipoprotein</keyword>
<keyword id="KW-0472">Membrane</keyword>
<keyword id="KW-0523">Neurodegeneration</keyword>
<keyword id="KW-1267">Proteomics identification</keyword>
<keyword id="KW-0675">Receptor</keyword>
<keyword id="KW-1185">Reference proteome</keyword>
<keyword id="KW-0964">Secreted</keyword>
<keyword id="KW-0732">Signal</keyword>
<keyword id="KW-0813">Transport</keyword>
<dbReference type="EMBL" id="J05013">
    <property type="protein sequence ID" value="AAA35823.1"/>
    <property type="molecule type" value="mRNA"/>
</dbReference>
<dbReference type="EMBL" id="M28099">
    <property type="protein sequence ID" value="AAA35822.1"/>
    <property type="molecule type" value="mRNA"/>
</dbReference>
<dbReference type="EMBL" id="X62753">
    <property type="protein sequence ID" value="CAA44610.1"/>
    <property type="molecule type" value="mRNA"/>
</dbReference>
<dbReference type="EMBL" id="U20391">
    <property type="protein sequence ID" value="AAB05827.1"/>
    <property type="molecule type" value="Genomic_DNA"/>
</dbReference>
<dbReference type="EMBL" id="U78793">
    <property type="protein sequence ID" value="AAB39751.1"/>
    <property type="molecule type" value="mRNA"/>
</dbReference>
<dbReference type="EMBL" id="U78794">
    <property type="protein sequence ID" value="AAB39752.1"/>
    <property type="molecule type" value="mRNA"/>
</dbReference>
<dbReference type="EMBL" id="BT007158">
    <property type="protein sequence ID" value="AAP35822.1"/>
    <property type="molecule type" value="mRNA"/>
</dbReference>
<dbReference type="EMBL" id="CR542019">
    <property type="protein sequence ID" value="CAG46816.1"/>
    <property type="molecule type" value="mRNA"/>
</dbReference>
<dbReference type="EMBL" id="AK223527">
    <property type="protein sequence ID" value="BAD97247.1"/>
    <property type="molecule type" value="mRNA"/>
</dbReference>
<dbReference type="EMBL" id="CH471076">
    <property type="protein sequence ID" value="EAW74848.1"/>
    <property type="molecule type" value="Genomic_DNA"/>
</dbReference>
<dbReference type="EMBL" id="BC002947">
    <property type="protein sequence ID" value="AAH02947.1"/>
    <property type="molecule type" value="mRNA"/>
</dbReference>
<dbReference type="EMBL" id="M25317">
    <property type="protein sequence ID" value="AAA74896.1"/>
    <property type="molecule type" value="mRNA"/>
</dbReference>
<dbReference type="CCDS" id="CCDS8211.1"/>
<dbReference type="PIR" id="A44904">
    <property type="entry name" value="A45753"/>
</dbReference>
<dbReference type="RefSeq" id="NP_000793.1">
    <property type="nucleotide sequence ID" value="NM_000802.3"/>
</dbReference>
<dbReference type="RefSeq" id="NP_057936.1">
    <property type="nucleotide sequence ID" value="NM_016724.3"/>
</dbReference>
<dbReference type="RefSeq" id="NP_057937.1">
    <property type="nucleotide sequence ID" value="NM_016725.3"/>
</dbReference>
<dbReference type="RefSeq" id="NP_057941.1">
    <property type="nucleotide sequence ID" value="NM_016729.3"/>
</dbReference>
<dbReference type="PDB" id="4KM6">
    <property type="method" value="X-ray"/>
    <property type="resolution" value="1.55 A"/>
    <property type="chains" value="A=30-234"/>
</dbReference>
<dbReference type="PDB" id="4KM7">
    <property type="method" value="X-ray"/>
    <property type="resolution" value="1.80 A"/>
    <property type="chains" value="A/B=28-234"/>
</dbReference>
<dbReference type="PDB" id="4KMX">
    <property type="method" value="X-ray"/>
    <property type="resolution" value="2.20 A"/>
    <property type="chains" value="A=28-234"/>
</dbReference>
<dbReference type="PDB" id="4LRH">
    <property type="method" value="X-ray"/>
    <property type="resolution" value="2.80 A"/>
    <property type="chains" value="A/B/C/D/E/F/G/H=23-235"/>
</dbReference>
<dbReference type="PDB" id="5IZQ">
    <property type="method" value="X-ray"/>
    <property type="resolution" value="3.60 A"/>
    <property type="chains" value="A/B/C/D/E/F/G/H=1-235"/>
</dbReference>
<dbReference type="PDBsum" id="4KM6"/>
<dbReference type="PDBsum" id="4KM7"/>
<dbReference type="PDBsum" id="4KMX"/>
<dbReference type="PDBsum" id="4LRH"/>
<dbReference type="PDBsum" id="5IZQ"/>
<dbReference type="SMR" id="P15328"/>
<dbReference type="BioGRID" id="108631">
    <property type="interactions" value="232"/>
</dbReference>
<dbReference type="CORUM" id="P15328"/>
<dbReference type="FunCoup" id="P15328">
    <property type="interactions" value="273"/>
</dbReference>
<dbReference type="IntAct" id="P15328">
    <property type="interactions" value="16"/>
</dbReference>
<dbReference type="MINT" id="P15328"/>
<dbReference type="STRING" id="9606.ENSP00000377284"/>
<dbReference type="BindingDB" id="P15328"/>
<dbReference type="ChEMBL" id="CHEMBL2121"/>
<dbReference type="DrugBank" id="DB12559">
    <property type="generic name" value="EC-17"/>
</dbReference>
<dbReference type="DrugBank" id="DB12266">
    <property type="generic name" value="Epofolate"/>
</dbReference>
<dbReference type="DrugBank" id="DB05595">
    <property type="generic name" value="Farletuzumab"/>
</dbReference>
<dbReference type="DrugBank" id="DB00158">
    <property type="generic name" value="Folic acid"/>
</dbReference>
<dbReference type="DrugBank" id="DB00563">
    <property type="generic name" value="Methotrexate"/>
</dbReference>
<dbReference type="DrugBank" id="DB12489">
    <property type="generic name" value="Mirvetuximab soravtansine"/>
</dbReference>
<dbReference type="DrugBank" id="DB15413">
    <property type="generic name" value="Pafolacianine"/>
</dbReference>
<dbReference type="DrugBank" id="DB00205">
    <property type="generic name" value="Pyrimethamine"/>
</dbReference>
<dbReference type="DrugBank" id="DB06178">
    <property type="generic name" value="Talotrexin"/>
</dbReference>
<dbReference type="DrugBank" id="DB05168">
    <property type="generic name" value="Vintafolide"/>
</dbReference>
<dbReference type="DrugCentral" id="P15328"/>
<dbReference type="GuidetoPHARMACOLOGY" id="3212"/>
<dbReference type="TCDB" id="9.B.92.1.1">
    <property type="family name" value="the folate receptor (fr) family"/>
</dbReference>
<dbReference type="GlyConnect" id="1248">
    <property type="glycosylation" value="24 N-Linked glycans (3 sites)"/>
</dbReference>
<dbReference type="GlyCosmos" id="P15328">
    <property type="glycosylation" value="3 sites, 23 glycans"/>
</dbReference>
<dbReference type="GlyGen" id="P15328">
    <property type="glycosylation" value="5 sites, 67 N-linked glycans (3 sites), 1 O-linked glycan (1 site)"/>
</dbReference>
<dbReference type="iPTMnet" id="P15328"/>
<dbReference type="PhosphoSitePlus" id="P15328"/>
<dbReference type="SwissPalm" id="P15328"/>
<dbReference type="BioMuta" id="FOLR1"/>
<dbReference type="DMDM" id="544337"/>
<dbReference type="jPOST" id="P15328"/>
<dbReference type="MassIVE" id="P15328"/>
<dbReference type="PaxDb" id="9606-ENSP00000377284"/>
<dbReference type="PeptideAtlas" id="P15328"/>
<dbReference type="ProteomicsDB" id="53130"/>
<dbReference type="Pumba" id="P15328"/>
<dbReference type="ABCD" id="P15328">
    <property type="antibodies" value="8 sequenced antibodies"/>
</dbReference>
<dbReference type="Antibodypedia" id="16919">
    <property type="antibodies" value="524 antibodies from 40 providers"/>
</dbReference>
<dbReference type="DNASU" id="2348"/>
<dbReference type="Ensembl" id="ENST00000312293.9">
    <property type="protein sequence ID" value="ENSP00000308137.4"/>
    <property type="gene ID" value="ENSG00000110195.14"/>
</dbReference>
<dbReference type="Ensembl" id="ENST00000393676.5">
    <property type="protein sequence ID" value="ENSP00000377281.3"/>
    <property type="gene ID" value="ENSG00000110195.14"/>
</dbReference>
<dbReference type="Ensembl" id="ENST00000393679.5">
    <property type="protein sequence ID" value="ENSP00000377284.1"/>
    <property type="gene ID" value="ENSG00000110195.14"/>
</dbReference>
<dbReference type="Ensembl" id="ENST00000393681.6">
    <property type="protein sequence ID" value="ENSP00000377286.2"/>
    <property type="gene ID" value="ENSG00000110195.14"/>
</dbReference>
<dbReference type="Ensembl" id="ENST00000675784.1">
    <property type="protein sequence ID" value="ENSP00000502440.1"/>
    <property type="gene ID" value="ENSG00000110195.14"/>
</dbReference>
<dbReference type="GeneID" id="2348"/>
<dbReference type="KEGG" id="hsa:2348"/>
<dbReference type="MANE-Select" id="ENST00000393676.5">
    <property type="protein sequence ID" value="ENSP00000377281.3"/>
    <property type="RefSeq nucleotide sequence ID" value="NM_016729.3"/>
    <property type="RefSeq protein sequence ID" value="NP_057941.1"/>
</dbReference>
<dbReference type="UCSC" id="uc001orz.3">
    <property type="organism name" value="human"/>
</dbReference>
<dbReference type="AGR" id="HGNC:3791"/>
<dbReference type="CTD" id="2348"/>
<dbReference type="DisGeNET" id="2348"/>
<dbReference type="GeneCards" id="FOLR1"/>
<dbReference type="GeneReviews" id="FOLR1"/>
<dbReference type="HGNC" id="HGNC:3791">
    <property type="gene designation" value="FOLR1"/>
</dbReference>
<dbReference type="HPA" id="ENSG00000110195">
    <property type="expression patterns" value="Tissue enriched (choroid)"/>
</dbReference>
<dbReference type="MalaCards" id="FOLR1"/>
<dbReference type="MIM" id="136430">
    <property type="type" value="gene"/>
</dbReference>
<dbReference type="MIM" id="613068">
    <property type="type" value="phenotype"/>
</dbReference>
<dbReference type="neXtProt" id="NX_P15328"/>
<dbReference type="OpenTargets" id="ENSG00000110195"/>
<dbReference type="Orphanet" id="217382">
    <property type="disease" value="Neurodegenerative syndrome due to cerebral folate transport deficiency"/>
</dbReference>
<dbReference type="PharmGKB" id="PA28207"/>
<dbReference type="VEuPathDB" id="HostDB:ENSG00000110195"/>
<dbReference type="eggNOG" id="KOG3656">
    <property type="taxonomic scope" value="Eukaryota"/>
</dbReference>
<dbReference type="GeneTree" id="ENSGT00950000183144"/>
<dbReference type="HOGENOM" id="CLU_070826_1_1_1"/>
<dbReference type="InParanoid" id="P15328"/>
<dbReference type="OMA" id="YNRCPAG"/>
<dbReference type="OrthoDB" id="567542at2759"/>
<dbReference type="PAN-GO" id="P15328">
    <property type="GO annotations" value="5 GO annotations based on evolutionary models"/>
</dbReference>
<dbReference type="PhylomeDB" id="P15328"/>
<dbReference type="TreeFam" id="TF328532"/>
<dbReference type="PathwayCommons" id="P15328"/>
<dbReference type="Reactome" id="R-HSA-204005">
    <property type="pathway name" value="COPII-mediated vesicle transport"/>
</dbReference>
<dbReference type="Reactome" id="R-HSA-5694530">
    <property type="pathway name" value="Cargo concentration in the ER"/>
</dbReference>
<dbReference type="Reactome" id="R-HSA-6807878">
    <property type="pathway name" value="COPI-mediated anterograde transport"/>
</dbReference>
<dbReference type="SignaLink" id="P15328"/>
<dbReference type="SIGNOR" id="P15328"/>
<dbReference type="BioGRID-ORCS" id="2348">
    <property type="hits" value="21 hits in 1150 CRISPR screens"/>
</dbReference>
<dbReference type="EvolutionaryTrace" id="P15328"/>
<dbReference type="GeneWiki" id="Folate_receptor_1"/>
<dbReference type="GenomeRNAi" id="2348"/>
<dbReference type="Pharos" id="P15328">
    <property type="development level" value="Tclin"/>
</dbReference>
<dbReference type="PRO" id="PR:P15328"/>
<dbReference type="Proteomes" id="UP000005640">
    <property type="component" value="Chromosome 11"/>
</dbReference>
<dbReference type="RNAct" id="P15328">
    <property type="molecule type" value="protein"/>
</dbReference>
<dbReference type="Bgee" id="ENSG00000110195">
    <property type="expression patterns" value="Expressed in right uterine tube and 133 other cell types or tissues"/>
</dbReference>
<dbReference type="ExpressionAtlas" id="P15328">
    <property type="expression patterns" value="baseline and differential"/>
</dbReference>
<dbReference type="GO" id="GO:0016324">
    <property type="term" value="C:apical plasma membrane"/>
    <property type="evidence" value="ECO:0000314"/>
    <property type="project" value="BHF-UCL"/>
</dbReference>
<dbReference type="GO" id="GO:0016323">
    <property type="term" value="C:basolateral plasma membrane"/>
    <property type="evidence" value="ECO:0000314"/>
    <property type="project" value="BHF-UCL"/>
</dbReference>
<dbReference type="GO" id="GO:0031526">
    <property type="term" value="C:brush border membrane"/>
    <property type="evidence" value="ECO:0007669"/>
    <property type="project" value="Ensembl"/>
</dbReference>
<dbReference type="GO" id="GO:0009986">
    <property type="term" value="C:cell surface"/>
    <property type="evidence" value="ECO:0007005"/>
    <property type="project" value="UniProtKB"/>
</dbReference>
<dbReference type="GO" id="GO:0030136">
    <property type="term" value="C:clathrin-coated vesicle"/>
    <property type="evidence" value="ECO:0007669"/>
    <property type="project" value="UniProtKB-SubCell"/>
</dbReference>
<dbReference type="GO" id="GO:0005789">
    <property type="term" value="C:endoplasmic reticulum membrane"/>
    <property type="evidence" value="ECO:0000304"/>
    <property type="project" value="Reactome"/>
</dbReference>
<dbReference type="GO" id="GO:0033116">
    <property type="term" value="C:endoplasmic reticulum-Golgi intermediate compartment membrane"/>
    <property type="evidence" value="ECO:0000304"/>
    <property type="project" value="Reactome"/>
</dbReference>
<dbReference type="GO" id="GO:0005768">
    <property type="term" value="C:endosome"/>
    <property type="evidence" value="ECO:0007669"/>
    <property type="project" value="UniProtKB-SubCell"/>
</dbReference>
<dbReference type="GO" id="GO:0012507">
    <property type="term" value="C:ER to Golgi transport vesicle membrane"/>
    <property type="evidence" value="ECO:0000304"/>
    <property type="project" value="Reactome"/>
</dbReference>
<dbReference type="GO" id="GO:0009897">
    <property type="term" value="C:external side of plasma membrane"/>
    <property type="evidence" value="ECO:0000314"/>
    <property type="project" value="UniProtKB"/>
</dbReference>
<dbReference type="GO" id="GO:0070062">
    <property type="term" value="C:extracellular exosome"/>
    <property type="evidence" value="ECO:0007005"/>
    <property type="project" value="UniProtKB"/>
</dbReference>
<dbReference type="GO" id="GO:0000139">
    <property type="term" value="C:Golgi membrane"/>
    <property type="evidence" value="ECO:0000304"/>
    <property type="project" value="Reactome"/>
</dbReference>
<dbReference type="GO" id="GO:0016020">
    <property type="term" value="C:membrane"/>
    <property type="evidence" value="ECO:0000304"/>
    <property type="project" value="UniProtKB"/>
</dbReference>
<dbReference type="GO" id="GO:0005634">
    <property type="term" value="C:nucleus"/>
    <property type="evidence" value="ECO:0000314"/>
    <property type="project" value="CACAO"/>
</dbReference>
<dbReference type="GO" id="GO:0005886">
    <property type="term" value="C:plasma membrane"/>
    <property type="evidence" value="ECO:0000303"/>
    <property type="project" value="UniProtKB"/>
</dbReference>
<dbReference type="GO" id="GO:0030133">
    <property type="term" value="C:transport vesicle"/>
    <property type="evidence" value="ECO:0000304"/>
    <property type="project" value="Reactome"/>
</dbReference>
<dbReference type="GO" id="GO:0005542">
    <property type="term" value="F:folic acid binding"/>
    <property type="evidence" value="ECO:0000314"/>
    <property type="project" value="UniProtKB"/>
</dbReference>
<dbReference type="GO" id="GO:0061714">
    <property type="term" value="F:folic acid receptor activity"/>
    <property type="evidence" value="ECO:0000315"/>
    <property type="project" value="UniProtKB"/>
</dbReference>
<dbReference type="GO" id="GO:0038023">
    <property type="term" value="F:signaling receptor activity"/>
    <property type="evidence" value="ECO:0000318"/>
    <property type="project" value="GO_Central"/>
</dbReference>
<dbReference type="GO" id="GO:0061713">
    <property type="term" value="P:anterior neural tube closure"/>
    <property type="evidence" value="ECO:0000250"/>
    <property type="project" value="BHF-UCL"/>
</dbReference>
<dbReference type="GO" id="GO:0031103">
    <property type="term" value="P:axon regeneration"/>
    <property type="evidence" value="ECO:0000250"/>
    <property type="project" value="BHF-UCL"/>
</dbReference>
<dbReference type="GO" id="GO:0003253">
    <property type="term" value="P:cardiac neural crest cell migration involved in outflow tract morphogenesis"/>
    <property type="evidence" value="ECO:0000250"/>
    <property type="project" value="BHF-UCL"/>
</dbReference>
<dbReference type="GO" id="GO:0007155">
    <property type="term" value="P:cell adhesion"/>
    <property type="evidence" value="ECO:0000318"/>
    <property type="project" value="GO_Central"/>
</dbReference>
<dbReference type="GO" id="GO:0071231">
    <property type="term" value="P:cellular response to folic acid"/>
    <property type="evidence" value="ECO:0000314"/>
    <property type="project" value="BHF-UCL"/>
</dbReference>
<dbReference type="GO" id="GO:0046655">
    <property type="term" value="P:folic acid metabolic process"/>
    <property type="evidence" value="ECO:0007669"/>
    <property type="project" value="Ensembl"/>
</dbReference>
<dbReference type="GO" id="GO:0015884">
    <property type="term" value="P:folic acid transport"/>
    <property type="evidence" value="ECO:0000315"/>
    <property type="project" value="UniProtKB"/>
</dbReference>
<dbReference type="GO" id="GO:0007342">
    <property type="term" value="P:fusion of sperm to egg plasma membrane involved in single fertilization"/>
    <property type="evidence" value="ECO:0000318"/>
    <property type="project" value="GO_Central"/>
</dbReference>
<dbReference type="GO" id="GO:0001947">
    <property type="term" value="P:heart looping"/>
    <property type="evidence" value="ECO:0000250"/>
    <property type="project" value="BHF-UCL"/>
</dbReference>
<dbReference type="GO" id="GO:0003147">
    <property type="term" value="P:neural crest cell migration involved in heart formation"/>
    <property type="evidence" value="ECO:0000250"/>
    <property type="project" value="BHF-UCL"/>
</dbReference>
<dbReference type="GO" id="GO:0061626">
    <property type="term" value="P:pharyngeal arch artery morphogenesis"/>
    <property type="evidence" value="ECO:0000250"/>
    <property type="project" value="BHF-UCL"/>
</dbReference>
<dbReference type="GO" id="GO:0006898">
    <property type="term" value="P:receptor-mediated endocytosis"/>
    <property type="evidence" value="ECO:0000304"/>
    <property type="project" value="ProtInc"/>
</dbReference>
<dbReference type="GO" id="GO:0060828">
    <property type="term" value="P:regulation of canonical Wnt signaling pathway"/>
    <property type="evidence" value="ECO:0000250"/>
    <property type="project" value="BHF-UCL"/>
</dbReference>
<dbReference type="GO" id="GO:0017015">
    <property type="term" value="P:regulation of transforming growth factor beta receptor signaling pathway"/>
    <property type="evidence" value="ECO:0000250"/>
    <property type="project" value="BHF-UCL"/>
</dbReference>
<dbReference type="GO" id="GO:0035036">
    <property type="term" value="P:sperm-egg recognition"/>
    <property type="evidence" value="ECO:0000318"/>
    <property type="project" value="GO_Central"/>
</dbReference>
<dbReference type="GO" id="GO:0046654">
    <property type="term" value="P:tetrahydrofolate biosynthetic process"/>
    <property type="evidence" value="ECO:0007669"/>
    <property type="project" value="Ensembl"/>
</dbReference>
<dbReference type="InterPro" id="IPR004269">
    <property type="entry name" value="Folate_rcpt"/>
</dbReference>
<dbReference type="InterPro" id="IPR018143">
    <property type="entry name" value="Folate_rcpt-like"/>
</dbReference>
<dbReference type="PANTHER" id="PTHR10517">
    <property type="entry name" value="FOLATE RECEPTOR"/>
    <property type="match status" value="1"/>
</dbReference>
<dbReference type="PANTHER" id="PTHR10517:SF15">
    <property type="entry name" value="FOLATE RECEPTOR ALPHA"/>
    <property type="match status" value="1"/>
</dbReference>
<dbReference type="Pfam" id="PF03024">
    <property type="entry name" value="Folate_rec"/>
    <property type="match status" value="1"/>
</dbReference>
<feature type="signal peptide" evidence="2">
    <location>
        <begin position="1"/>
        <end position="24"/>
    </location>
</feature>
<feature type="chain" id="PRO_0000008802" description="Folate receptor alpha">
    <location>
        <begin position="25"/>
        <end position="234"/>
    </location>
</feature>
<feature type="propeptide" id="PRO_0000008803" description="Removed in mature form" evidence="17 19">
    <location>
        <begin position="235"/>
        <end position="257"/>
    </location>
</feature>
<feature type="binding site" evidence="8">
    <location>
        <position position="103"/>
    </location>
    <ligand>
        <name>folate</name>
        <dbReference type="ChEBI" id="CHEBI:62501"/>
    </ligand>
</feature>
<feature type="binding site" evidence="8">
    <location>
        <position position="107"/>
    </location>
    <ligand>
        <name>folate</name>
        <dbReference type="ChEBI" id="CHEBI:62501"/>
    </ligand>
</feature>
<feature type="binding site" evidence="8">
    <location>
        <begin position="124"/>
        <end position="128"/>
    </location>
    <ligand>
        <name>folate</name>
        <dbReference type="ChEBI" id="CHEBI:62501"/>
    </ligand>
</feature>
<feature type="binding site" evidence="8">
    <location>
        <begin position="157"/>
        <end position="162"/>
    </location>
    <ligand>
        <name>folate</name>
        <dbReference type="ChEBI" id="CHEBI:62501"/>
    </ligand>
</feature>
<feature type="binding site" evidence="8">
    <location>
        <position position="196"/>
    </location>
    <ligand>
        <name>folate</name>
        <dbReference type="ChEBI" id="CHEBI:62501"/>
    </ligand>
</feature>
<feature type="lipid moiety-binding region" description="GPI-anchor amidated serine" evidence="4 12">
    <location>
        <position position="234"/>
    </location>
</feature>
<feature type="glycosylation site" description="N-linked (GlcNAc...) asparagine" evidence="8 9">
    <location>
        <position position="69"/>
    </location>
</feature>
<feature type="glycosylation site" description="N-linked (GlcNAc...) asparagine" evidence="5 8 9">
    <location>
        <position position="161"/>
    </location>
</feature>
<feature type="glycosylation site" description="N-linked (GlcNAc...) asparagine" evidence="5 8 9">
    <location>
        <position position="201"/>
    </location>
</feature>
<feature type="disulfide bond" evidence="8 9 20 21 22 23">
    <location>
        <begin position="37"/>
        <end position="65"/>
    </location>
</feature>
<feature type="disulfide bond" evidence="8 9 20 21 22 23">
    <location>
        <begin position="57"/>
        <end position="105"/>
    </location>
</feature>
<feature type="disulfide bond" evidence="8 9 20 21 22 23">
    <location>
        <begin position="66"/>
        <end position="109"/>
    </location>
</feature>
<feature type="disulfide bond" evidence="8 9 20 21 22 23">
    <location>
        <begin position="89"/>
        <end position="175"/>
    </location>
</feature>
<feature type="disulfide bond" evidence="8 9 20 21 22 23">
    <location>
        <begin position="96"/>
        <end position="146"/>
    </location>
</feature>
<feature type="disulfide bond" evidence="8 9 20 21 22 23">
    <location>
        <begin position="135"/>
        <end position="209"/>
    </location>
</feature>
<feature type="disulfide bond" evidence="8 9 20 21 22 23">
    <location>
        <begin position="139"/>
        <end position="189"/>
    </location>
</feature>
<feature type="disulfide bond" evidence="8 9 20 21 22 23">
    <location>
        <begin position="152"/>
        <end position="169"/>
    </location>
</feature>
<feature type="sequence variant" id="VAR_059284" description="In dbSNP:rs7928649.">
    <original>W</original>
    <variation>R</variation>
    <location>
        <position position="28"/>
    </location>
</feature>
<feature type="sequence variant" id="VAR_011963" description="In dbSNP:rs1801932.">
    <original>W</original>
    <variation>C</variation>
    <location>
        <position position="160"/>
    </location>
</feature>
<feature type="mutagenesis site" description="Slightly reduced affinity for folate." evidence="8">
    <original>Y</original>
    <variation>A</variation>
    <location>
        <position position="82"/>
    </location>
</feature>
<feature type="mutagenesis site" description="Strongly reduced affinity for folate." evidence="8">
    <original>D</original>
    <variation>A</variation>
    <location>
        <position position="103"/>
    </location>
</feature>
<feature type="mutagenesis site" description="Moderately reduced affinity for folate." evidence="8">
    <original>Y</original>
    <variation>A</variation>
    <location>
        <position position="107"/>
    </location>
</feature>
<feature type="mutagenesis site" description="Moderately reduced affinity for folate." evidence="8">
    <original>W</original>
    <variation>A</variation>
    <location>
        <position position="124"/>
    </location>
</feature>
<feature type="mutagenesis site" description="Moderately reduced affinity for folate." evidence="8">
    <original>R</original>
    <variation>A</variation>
    <location>
        <position position="125"/>
    </location>
</feature>
<feature type="mutagenesis site" description="Moderately reduced affinity for folate." evidence="8">
    <original>R</original>
    <variation>A</variation>
    <location>
        <position position="128"/>
    </location>
</feature>
<feature type="mutagenesis site" description="Moderately reduced affinity for folate." evidence="8">
    <original>H</original>
    <variation>A</variation>
    <location>
        <position position="157"/>
    </location>
</feature>
<feature type="mutagenesis site" description="Moderately reduced affinity for folate." evidence="8">
    <original>W</original>
    <variation>A</variation>
    <location>
        <position position="162"/>
    </location>
</feature>
<feature type="mutagenesis site" description="Moderately reduced affinity for folate." evidence="8">
    <original>S</original>
    <variation>A</variation>
    <location>
        <position position="196"/>
    </location>
</feature>
<feature type="sequence conflict" description="In Ref. 9; BAD97247." evidence="16" ref="9">
    <original>F</original>
    <variation>L</variation>
    <location>
        <position position="180"/>
    </location>
</feature>
<feature type="sequence conflict" description="In Ref. 12; AAA74896." evidence="16" ref="12">
    <original>T</original>
    <variation>S</variation>
    <location>
        <position position="184"/>
    </location>
</feature>
<feature type="helix" evidence="25">
    <location>
        <begin position="31"/>
        <end position="33"/>
    </location>
</feature>
<feature type="strand" evidence="24">
    <location>
        <begin position="48"/>
        <end position="50"/>
    </location>
</feature>
<feature type="turn" evidence="24">
    <location>
        <begin position="53"/>
        <end position="56"/>
    </location>
</feature>
<feature type="helix" evidence="24">
    <location>
        <begin position="58"/>
        <end position="60"/>
    </location>
</feature>
<feature type="strand" evidence="24">
    <location>
        <begin position="63"/>
        <end position="67"/>
    </location>
</feature>
<feature type="helix" evidence="26">
    <location>
        <begin position="68"/>
        <end position="73"/>
    </location>
</feature>
<feature type="turn" evidence="24">
    <location>
        <begin position="81"/>
        <end position="83"/>
    </location>
</feature>
<feature type="turn" evidence="24">
    <location>
        <begin position="86"/>
        <end position="89"/>
    </location>
</feature>
<feature type="helix" evidence="24">
    <location>
        <begin position="94"/>
        <end position="109"/>
    </location>
</feature>
<feature type="helix" evidence="24">
    <location>
        <begin position="114"/>
        <end position="116"/>
    </location>
</feature>
<feature type="strand" evidence="26">
    <location>
        <begin position="117"/>
        <end position="122"/>
    </location>
</feature>
<feature type="strand" evidence="24">
    <location>
        <begin position="124"/>
        <end position="126"/>
    </location>
</feature>
<feature type="helix" evidence="24">
    <location>
        <begin position="136"/>
        <end position="145"/>
    </location>
</feature>
<feature type="turn" evidence="24">
    <location>
        <begin position="146"/>
        <end position="148"/>
    </location>
</feature>
<feature type="strand" evidence="24">
    <location>
        <begin position="150"/>
        <end position="152"/>
    </location>
</feature>
<feature type="strand" evidence="26">
    <location>
        <begin position="156"/>
        <end position="158"/>
    </location>
</feature>
<feature type="helix" evidence="26">
    <location>
        <begin position="172"/>
        <end position="174"/>
    </location>
</feature>
<feature type="helix" evidence="24">
    <location>
        <begin position="178"/>
        <end position="181"/>
    </location>
</feature>
<feature type="helix" evidence="24">
    <location>
        <begin position="185"/>
        <end position="191"/>
    </location>
</feature>
<feature type="turn" evidence="24">
    <location>
        <begin position="192"/>
        <end position="195"/>
    </location>
</feature>
<feature type="strand" evidence="24">
    <location>
        <begin position="206"/>
        <end position="210"/>
    </location>
</feature>
<feature type="helix" evidence="24">
    <location>
        <begin position="216"/>
        <end position="218"/>
    </location>
</feature>
<feature type="helix" evidence="24">
    <location>
        <begin position="222"/>
        <end position="232"/>
    </location>
</feature>
<comment type="function">
    <text evidence="1 6 8 9 10 13 14">Binds to folate and reduced folic acid derivatives and mediates delivery of 5-methyltetrahydrofolate and folate analogs into the interior of cells (PubMed:19074442, PubMed:23851396, PubMed:23934049, PubMed:2527252, PubMed:8033114, PubMed:8567728). Has high affinity for folate and folic acid analogs at neutral pH (PubMed:23851396, PubMed:23934049, PubMed:2527252, PubMed:8033114, PubMed:8567728). Exposure to slightly acidic pH after receptor endocytosis triggers a conformation change that strongly reduces its affinity for folates and mediates their release (PubMed:8567728). Required for normal embryonic development and normal cell proliferation (By similarity).</text>
</comment>
<comment type="interaction">
    <interactant intactId="EBI-2556557">
        <id>P15328</id>
    </interactant>
    <interactant intactId="EBI-713484">
        <id>Q8N357</id>
        <label>SLC35F6</label>
    </interactant>
    <organismsDiffer>false</organismsDiffer>
    <experiments>3</experiments>
</comment>
<comment type="subcellular location">
    <subcellularLocation>
        <location evidence="10 13 14">Cell membrane</location>
        <topology evidence="4 12">Lipid-anchor</topology>
        <topology evidence="4 12">GPI-anchor</topology>
    </subcellularLocation>
    <subcellularLocation>
        <location evidence="3">Apical cell membrane</location>
        <topology evidence="4 12">Lipid-anchor</topology>
        <topology evidence="4 12">GPI-anchor</topology>
    </subcellularLocation>
    <subcellularLocation>
        <location evidence="3">Basolateral cell membrane</location>
        <topology evidence="4 12">Lipid-anchor</topology>
        <topology evidence="4 12">GPI-like-anchor</topology>
    </subcellularLocation>
    <subcellularLocation>
        <location evidence="18">Secreted</location>
    </subcellularLocation>
    <subcellularLocation>
        <location evidence="14">Cytoplasmic vesicle</location>
    </subcellularLocation>
    <subcellularLocation>
        <location evidence="14">Cytoplasmic vesicle</location>
        <location evidence="14">Clathrin-coated vesicle</location>
    </subcellularLocation>
    <subcellularLocation>
        <location evidence="14">Endosome</location>
    </subcellularLocation>
    <text evidence="14">Endocytosed into cytoplasmic vesicles and then recycled to the cell membrane.</text>
</comment>
<comment type="tissue specificity">
    <text evidence="10 11 15">Primarily expressed in tissues of epithelial origin. Expression is increased in malignant tissues. Expressed in kidney, lung and cerebellum. Detected in placenta and thymus epithelium.</text>
</comment>
<comment type="PTM">
    <text evidence="18">The secreted form is derived from the membrane-bound form either by cleavage of the GPI anchor, or/and by proteolysis catalyzed by a metalloprotease.</text>
</comment>
<comment type="disease" evidence="7">
    <disease id="DI-02630">
        <name>Neurodegeneration due to cerebral folate transport deficiency</name>
        <acronym>NCFTD</acronym>
        <description>An autosomal recessive neurodegenerative disorder resulting from brain-specific folate deficiency early in life. Onset is apparent in late infancy with severe developmental regression, movement disturbances, epilepsy and leukodystrophy.</description>
        <dbReference type="MIM" id="613068"/>
    </disease>
    <text>The disease is caused by variants affecting the gene represented in this entry.</text>
</comment>
<comment type="similarity">
    <text evidence="16">Belongs to the folate receptor family.</text>
</comment>
<evidence type="ECO:0000250" key="1">
    <source>
        <dbReference type="UniProtKB" id="P35846"/>
    </source>
</evidence>
<evidence type="ECO:0000255" key="2"/>
<evidence type="ECO:0000269" key="3">
    <source>
    </source>
</evidence>
<evidence type="ECO:0000269" key="4">
    <source>
    </source>
</evidence>
<evidence type="ECO:0000269" key="5">
    <source>
    </source>
</evidence>
<evidence type="ECO:0000269" key="6">
    <source>
    </source>
</evidence>
<evidence type="ECO:0000269" key="7">
    <source>
    </source>
</evidence>
<evidence type="ECO:0000269" key="8">
    <source>
    </source>
</evidence>
<evidence type="ECO:0000269" key="9">
    <source>
    </source>
</evidence>
<evidence type="ECO:0000269" key="10">
    <source>
    </source>
</evidence>
<evidence type="ECO:0000269" key="11">
    <source>
    </source>
</evidence>
<evidence type="ECO:0000269" key="12">
    <source>
    </source>
</evidence>
<evidence type="ECO:0000269" key="13">
    <source>
    </source>
</evidence>
<evidence type="ECO:0000269" key="14">
    <source>
    </source>
</evidence>
<evidence type="ECO:0000269" key="15">
    <source>
    </source>
</evidence>
<evidence type="ECO:0000305" key="16"/>
<evidence type="ECO:0000305" key="17">
    <source>
    </source>
</evidence>
<evidence type="ECO:0000305" key="18">
    <source>
    </source>
</evidence>
<evidence type="ECO:0000305" key="19">
    <source>
    </source>
</evidence>
<evidence type="ECO:0007744" key="20">
    <source>
        <dbReference type="PDB" id="4KM6"/>
    </source>
</evidence>
<evidence type="ECO:0007744" key="21">
    <source>
        <dbReference type="PDB" id="4KM7"/>
    </source>
</evidence>
<evidence type="ECO:0007744" key="22">
    <source>
        <dbReference type="PDB" id="4KMX"/>
    </source>
</evidence>
<evidence type="ECO:0007744" key="23">
    <source>
        <dbReference type="PDB" id="4LRH"/>
    </source>
</evidence>
<evidence type="ECO:0007829" key="24">
    <source>
        <dbReference type="PDB" id="4KM6"/>
    </source>
</evidence>
<evidence type="ECO:0007829" key="25">
    <source>
        <dbReference type="PDB" id="4KMX"/>
    </source>
</evidence>
<evidence type="ECO:0007829" key="26">
    <source>
        <dbReference type="PDB" id="4LRH"/>
    </source>
</evidence>
<organism>
    <name type="scientific">Homo sapiens</name>
    <name type="common">Human</name>
    <dbReference type="NCBI Taxonomy" id="9606"/>
    <lineage>
        <taxon>Eukaryota</taxon>
        <taxon>Metazoa</taxon>
        <taxon>Chordata</taxon>
        <taxon>Craniata</taxon>
        <taxon>Vertebrata</taxon>
        <taxon>Euteleostomi</taxon>
        <taxon>Mammalia</taxon>
        <taxon>Eutheria</taxon>
        <taxon>Euarchontoglires</taxon>
        <taxon>Primates</taxon>
        <taxon>Haplorrhini</taxon>
        <taxon>Catarrhini</taxon>
        <taxon>Hominidae</taxon>
        <taxon>Homo</taxon>
    </lineage>
</organism>
<reference key="1">
    <citation type="journal article" date="1989" name="J. Biol. Chem.">
        <title>Molecular cloning and characterization of the human folate-binding protein cDNA from placenta and malignant tissue culture (KB) cells.</title>
        <authorList>
            <person name="Elwood P.C."/>
        </authorList>
    </citation>
    <scope>NUCLEOTIDE SEQUENCE [MRNA]</scope>
    <scope>PARTIAL PROTEIN SEQUENCE</scope>
    <scope>GLYCOSYLATION</scope>
    <scope>TISSUE SPECIFICITY</scope>
</reference>
<reference key="2">
    <citation type="journal article" date="1989" name="J. Clin. Invest.">
        <title>Complementary DNA for the folate binding protein correctly predicts anchoring to the membrane by glycosyl-phosphatidylinositol.</title>
        <authorList>
            <person name="Lacey S.W."/>
            <person name="Sanders J.M."/>
            <person name="Rothberg K.G."/>
            <person name="Anderson R.G.W."/>
            <person name="Kamen B.A."/>
        </authorList>
    </citation>
    <scope>NUCLEOTIDE SEQUENCE [MRNA]</scope>
    <scope>FUNCTION</scope>
    <scope>SUBCELLULAR LOCATION</scope>
    <scope>TISSUE SPECIFICITY</scope>
</reference>
<reference key="3">
    <citation type="journal article" date="1991" name="Cancer Res.">
        <title>Folate-binding protein is a marker for ovarian cancer.</title>
        <authorList>
            <person name="Campbell I.G."/>
            <person name="Jones T.A."/>
            <person name="Foulkes W.D."/>
            <person name="Trowsdale J."/>
        </authorList>
    </citation>
    <scope>NUCLEOTIDE SEQUENCE [MRNA]</scope>
    <source>
        <tissue>Ovary</tissue>
    </source>
</reference>
<reference key="4">
    <citation type="journal article" date="1991" name="Cancer Res.">
        <title>Cloning of a tumor-associated antigen: MOv18 and MOv19 antibodies recognize a folate-binding protein.</title>
        <authorList>
            <person name="Coney L.R."/>
            <person name="Tomassetti A."/>
            <person name="Carayannopoulos L."/>
            <person name="Frasca V."/>
            <person name="Kamen B.A."/>
            <person name="Colnaghi M.I."/>
            <person name="Zurawski V.R. Jr."/>
        </authorList>
    </citation>
    <scope>NUCLEOTIDE SEQUENCE [MRNA]</scope>
    <scope>PROTEIN SEQUENCE OF 31-56</scope>
    <source>
        <tissue>Ovarian carcinoma</tissue>
    </source>
</reference>
<reference key="5">
    <citation type="journal article" date="1992" name="Biochim. Biophys. Acta">
        <title>Genomic organization of the gene and a related pseudogene for a human folate binding protein.</title>
        <authorList>
            <person name="Sadasivan E."/>
            <person name="Cedeno M."/>
            <person name="Rothenberg S.P."/>
        </authorList>
    </citation>
    <scope>NUCLEOTIDE SEQUENCE [GENOMIC DNA]</scope>
</reference>
<reference key="6">
    <citation type="journal article" date="1997" name="Biochemistry">
        <title>The divergent 5' termini of the alpha human folate receptor (hFR) mRNAs originate from two tissue-specific promoters and alternative splicing: characterization of the alpha hFR gene structure.</title>
        <authorList>
            <person name="Elwood P.C."/>
            <person name="Nachmanoff K."/>
            <person name="Saikawa Y."/>
            <person name="Page S.T."/>
            <person name="Pacheco P."/>
            <person name="Roberts S."/>
            <person name="Chung K.-N."/>
        </authorList>
    </citation>
    <scope>NUCLEOTIDE SEQUENCE [GENOMIC DNA]</scope>
    <scope>NUCLEOTIDE SEQUENCE [MRNA] OF 1-56</scope>
    <scope>TISSUE SPECIFICITY</scope>
    <source>
        <tissue>Lymphocyte</tissue>
    </source>
</reference>
<reference key="7">
    <citation type="submission" date="2003-05" db="EMBL/GenBank/DDBJ databases">
        <title>Cloning of human full-length CDSs in BD Creator(TM) system donor vector.</title>
        <authorList>
            <person name="Kalnine N."/>
            <person name="Chen X."/>
            <person name="Rolfs A."/>
            <person name="Halleck A."/>
            <person name="Hines L."/>
            <person name="Eisenstein S."/>
            <person name="Koundinya M."/>
            <person name="Raphael J."/>
            <person name="Moreira D."/>
            <person name="Kelley T."/>
            <person name="LaBaer J."/>
            <person name="Lin Y."/>
            <person name="Phelan M."/>
            <person name="Farmer A."/>
        </authorList>
    </citation>
    <scope>NUCLEOTIDE SEQUENCE [LARGE SCALE MRNA]</scope>
</reference>
<reference key="8">
    <citation type="submission" date="2004-06" db="EMBL/GenBank/DDBJ databases">
        <title>Cloning of human full open reading frames in Gateway(TM) system entry vector (pDONR201).</title>
        <authorList>
            <person name="Halleck A."/>
            <person name="Ebert L."/>
            <person name="Mkoundinya M."/>
            <person name="Schick M."/>
            <person name="Eisenstein S."/>
            <person name="Neubert P."/>
            <person name="Kstrang K."/>
            <person name="Schatten R."/>
            <person name="Shen B."/>
            <person name="Henze S."/>
            <person name="Mar W."/>
            <person name="Korn B."/>
            <person name="Zuo D."/>
            <person name="Hu Y."/>
            <person name="LaBaer J."/>
        </authorList>
    </citation>
    <scope>NUCLEOTIDE SEQUENCE [LARGE SCALE MRNA]</scope>
</reference>
<reference key="9">
    <citation type="submission" date="2005-04" db="EMBL/GenBank/DDBJ databases">
        <authorList>
            <person name="Totoki Y."/>
            <person name="Toyoda A."/>
            <person name="Takeda T."/>
            <person name="Sakaki Y."/>
            <person name="Tanaka A."/>
            <person name="Yokoyama S."/>
        </authorList>
    </citation>
    <scope>NUCLEOTIDE SEQUENCE [LARGE SCALE MRNA]</scope>
    <source>
        <tissue>Kidney proximal tubule</tissue>
    </source>
</reference>
<reference key="10">
    <citation type="submission" date="2005-07" db="EMBL/GenBank/DDBJ databases">
        <authorList>
            <person name="Mural R.J."/>
            <person name="Istrail S."/>
            <person name="Sutton G.G."/>
            <person name="Florea L."/>
            <person name="Halpern A.L."/>
            <person name="Mobarry C.M."/>
            <person name="Lippert R."/>
            <person name="Walenz B."/>
            <person name="Shatkay H."/>
            <person name="Dew I."/>
            <person name="Miller J.R."/>
            <person name="Flanigan M.J."/>
            <person name="Edwards N.J."/>
            <person name="Bolanos R."/>
            <person name="Fasulo D."/>
            <person name="Halldorsson B.V."/>
            <person name="Hannenhalli S."/>
            <person name="Turner R."/>
            <person name="Yooseph S."/>
            <person name="Lu F."/>
            <person name="Nusskern D.R."/>
            <person name="Shue B.C."/>
            <person name="Zheng X.H."/>
            <person name="Zhong F."/>
            <person name="Delcher A.L."/>
            <person name="Huson D.H."/>
            <person name="Kravitz S.A."/>
            <person name="Mouchard L."/>
            <person name="Reinert K."/>
            <person name="Remington K.A."/>
            <person name="Clark A.G."/>
            <person name="Waterman M.S."/>
            <person name="Eichler E.E."/>
            <person name="Adams M.D."/>
            <person name="Hunkapiller M.W."/>
            <person name="Myers E.W."/>
            <person name="Venter J.C."/>
        </authorList>
    </citation>
    <scope>NUCLEOTIDE SEQUENCE [LARGE SCALE GENOMIC DNA]</scope>
</reference>
<reference key="11">
    <citation type="journal article" date="2004" name="Genome Res.">
        <title>The status, quality, and expansion of the NIH full-length cDNA project: the Mammalian Gene Collection (MGC).</title>
        <authorList>
            <consortium name="The MGC Project Team"/>
        </authorList>
    </citation>
    <scope>NUCLEOTIDE SEQUENCE [LARGE SCALE MRNA]</scope>
    <source>
        <tissue>Placenta</tissue>
    </source>
</reference>
<reference key="12">
    <citation type="journal article" date="1989" name="J. Biol. Chem.">
        <title>The complete amino acid sequence of a human folate binding protein from KB cells determined from the cDNA.</title>
        <authorList>
            <person name="Sadasivan E."/>
            <person name="Rothenberg S.P."/>
        </authorList>
    </citation>
    <scope>NUCLEOTIDE SEQUENCE [MRNA] OF 24-249</scope>
</reference>
<reference key="13">
    <citation type="journal article" date="1987" name="Proc. Natl. Acad. Sci. U.S.A.">
        <title>Purified membrane and soluble folate binding proteins from cultured KB cells have similar amino acid compositions and molecular weights but differ in fatty acid acylation.</title>
        <authorList>
            <person name="Luhrs C.A."/>
            <person name="Pitiranggon P."/>
            <person name="da Costa M."/>
            <person name="Rothenberg S.P."/>
            <person name="Slomiany B.L."/>
            <person name="Brink L."/>
            <person name="Tous G.I."/>
            <person name="Stein S."/>
        </authorList>
    </citation>
    <scope>PROTEIN SEQUENCE OF 26-43</scope>
    <scope>SUBCELLULAR LOCATION</scope>
</reference>
<reference key="14">
    <citation type="journal article" date="1994" name="Cancer Res.">
        <title>UMSCC38 cells amplified at 11q13 for the folate receptor synthesize a mutant nonfunctional folate receptor.</title>
        <authorList>
            <person name="Orr R.B."/>
            <person name="Kamen B.A."/>
        </authorList>
    </citation>
    <scope>FUNCTION</scope>
    <scope>SUBCELLULAR LOCATION</scope>
</reference>
<reference key="15">
    <citation type="journal article" date="1995" name="Biochemistry">
        <title>Preferred sites of glycosylphosphatidylinositol modification in folate receptors and constraints in the primary structure of the hydrophobic portion of the signal.</title>
        <authorList>
            <person name="Yan W."/>
            <person name="Ratnam M."/>
        </authorList>
    </citation>
    <scope>GPI-ANCHOR AT SER-234</scope>
    <scope>SUBCELLULAR LOCATION</scope>
</reference>
<reference key="16">
    <citation type="journal article" date="1996" name="J. Cell Biol.">
        <title>Endocytosis of GPI-linked membrane folate receptor-alpha.</title>
        <authorList>
            <person name="Rijnboutt S."/>
            <person name="Jansen G."/>
            <person name="Posthuma G."/>
            <person name="Hynes J.B."/>
            <person name="Schornagel J.H."/>
            <person name="Strous G.J."/>
        </authorList>
    </citation>
    <scope>FUNCTION</scope>
    <scope>GLYCOSYLATION</scope>
    <scope>SUBCELLULAR LOCATION</scope>
</reference>
<reference key="17">
    <citation type="journal article" date="2000" name="J. Biol. Chem.">
        <title>Expression and differential polarization of the reduced-folate transporter-1 and the folate receptor alpha in mammalian retinal pigment epithelium.</title>
        <authorList>
            <person name="Chancy C.D."/>
            <person name="Kekuda R."/>
            <person name="Huang W."/>
            <person name="Prasad P.D."/>
            <person name="Kuhnel J.M."/>
            <person name="Sirotnak F.M."/>
            <person name="Roon P."/>
            <person name="Ganapathy V."/>
            <person name="Smith S.B."/>
        </authorList>
    </citation>
    <scope>SUBCELLULAR LOCATION</scope>
</reference>
<reference key="18">
    <citation type="journal article" date="2007" name="Proteomics">
        <title>Computational approach for identification and characterization of GPI-anchored peptides in proteomics experiments.</title>
        <authorList>
            <person name="Omaetxebarria M.J."/>
            <person name="Elortza F."/>
            <person name="Rodriguez-Suarez E."/>
            <person name="Aloria K."/>
            <person name="Arizmendi J.M."/>
            <person name="Jensen O.N."/>
            <person name="Matthiesen R."/>
        </authorList>
    </citation>
    <scope>GPI-ANCHOR AT SER-234</scope>
    <scope>IDENTIFICATION BY MASS SPECTROMETRY</scope>
</reference>
<reference key="19">
    <citation type="journal article" date="2008" name="Proteomics">
        <title>Identification of N-linked glycoproteins in human milk by hydrophilic interaction liquid chromatography and mass spectrometry.</title>
        <authorList>
            <person name="Picariello G."/>
            <person name="Ferranti P."/>
            <person name="Mamone G."/>
            <person name="Roepstorff P."/>
            <person name="Addeo F."/>
        </authorList>
    </citation>
    <scope>GLYCOSYLATION [LARGE SCALE ANALYSIS] AT ASN-161 AND ASN-201</scope>
    <source>
        <tissue>Milk</tissue>
    </source>
</reference>
<reference key="20">
    <citation type="journal article" date="2009" name="Am. J. Hum. Genet.">
        <title>Folate receptor alpha defect causes cerebral folate transport deficiency: a treatable neurodegenerative disorder associated with disturbed myelin metabolism.</title>
        <authorList>
            <person name="Steinfeld R."/>
            <person name="Grapp M."/>
            <person name="Kraetzner R."/>
            <person name="Dreha-Kulaczewski S."/>
            <person name="Helms G."/>
            <person name="Dechent P."/>
            <person name="Wevers R."/>
            <person name="Grosso S."/>
            <person name="Gaertner J."/>
        </authorList>
    </citation>
    <scope>INVOLVEMENT IN NEURODEGENERATION DUE TO CEREBRAL FOLATE TRANSPORT DEFICIENCY</scope>
</reference>
<reference key="21">
    <citation type="journal article" date="2009" name="J. Biol. Chem.">
        <title>A role for the proton-coupled folate transporter (PCFT-SLC46A1) in folate receptor-mediated endocytosis.</title>
        <authorList>
            <person name="Zhao R."/>
            <person name="Min S.H."/>
            <person name="Wang Y."/>
            <person name="Campanella E."/>
            <person name="Low P.S."/>
            <person name="Goldman I.D."/>
        </authorList>
    </citation>
    <scope>FUNCTION</scope>
</reference>
<reference key="22">
    <citation type="journal article" date="2013" name="Nature">
        <title>Structural basis for molecular recognition of folic acid by folate receptors.</title>
        <authorList>
            <person name="Chen C."/>
            <person name="Ke J."/>
            <person name="Zhou X.E."/>
            <person name="Yi W."/>
            <person name="Brunzelle J.S."/>
            <person name="Li J."/>
            <person name="Yong E.L."/>
            <person name="Xu H.E."/>
            <person name="Melcher K."/>
        </authorList>
    </citation>
    <scope>X-RAY CRYSTALLOGRAPHY (2.8 ANGSTROMS) OF 23-235 IN COMPLEX WITH FOLATE</scope>
    <scope>FUNCTION</scope>
    <scope>MUTAGENESIS OF TYR-82; ASP-103; TYR-107; TRP-124; ARG-125; ARG-128; HIS-157; TRP-162 AND SER-196</scope>
    <scope>DISULFIDE BONDS</scope>
    <scope>GLYCOSYLATION AT ASN-69; ASN-161 AND ASN-201</scope>
</reference>
<reference key="23">
    <citation type="journal article" date="2013" name="Proc. Natl. Acad. Sci. U.S.A.">
        <title>Structures of human folate receptors reveal biological trafficking states and diversity in folate and antifolate recognition.</title>
        <authorList>
            <person name="Wibowo A.S."/>
            <person name="Singh M."/>
            <person name="Reeder K.M."/>
            <person name="Carter J.J."/>
            <person name="Kovach A.R."/>
            <person name="Meng W."/>
            <person name="Ratnam M."/>
            <person name="Zhang F."/>
            <person name="Dann C.E. III"/>
        </authorList>
    </citation>
    <scope>X-RAY CRYSTALLOGRAPHY (1.55 ANGSTROMS) OF 30-234</scope>
    <scope>FUNCTION</scope>
    <scope>GLYCOSYLATION AT ASN-69; ASN-161 AND ASN-201</scope>
    <scope>DISULFIDE BONDS</scope>
</reference>
<accession>P15328</accession>
<accession>Q53EW2</accession>
<accession>Q6FGT8</accession>
<accession>Q6LC90</accession>
<accession>Q9UCT2</accession>
<name>FOLR1_HUMAN</name>
<gene>
    <name type="primary">FOLR1</name>
    <name type="synonym">FOLR</name>
</gene>
<protein>
    <recommendedName>
        <fullName>Folate receptor alpha</fullName>
        <shortName>FR-alpha</shortName>
    </recommendedName>
    <alternativeName>
        <fullName>Adult folate-binding protein</fullName>
        <shortName>FBP</shortName>
    </alternativeName>
    <alternativeName>
        <fullName>Folate receptor 1</fullName>
    </alternativeName>
    <alternativeName>
        <fullName>Folate receptor, adult</fullName>
    </alternativeName>
    <alternativeName>
        <fullName>KB cells FBP</fullName>
    </alternativeName>
    <alternativeName>
        <fullName>Ovarian tumor-associated antigen MOv18</fullName>
    </alternativeName>
</protein>